<organism>
    <name type="scientific">Tityus discrepans</name>
    <name type="common">Venezuelan scorpion</name>
    <dbReference type="NCBI Taxonomy" id="57059"/>
    <lineage>
        <taxon>Eukaryota</taxon>
        <taxon>Metazoa</taxon>
        <taxon>Ecdysozoa</taxon>
        <taxon>Arthropoda</taxon>
        <taxon>Chelicerata</taxon>
        <taxon>Arachnida</taxon>
        <taxon>Scorpiones</taxon>
        <taxon>Buthida</taxon>
        <taxon>Buthoidea</taxon>
        <taxon>Buthidae</taxon>
        <taxon>Tityus</taxon>
    </lineage>
</organism>
<accession>C9X4K4</accession>
<comment type="function">
    <text evidence="1">Beta toxins bind voltage-independently at site-4 of sodium channels (Nav) and shift the voltage of activation toward more negative potentials thereby affecting sodium channel activation and promoting spontaneous and repetitive firing. Is toxic to arthropods (By similarity).</text>
</comment>
<comment type="subcellular location">
    <subcellularLocation>
        <location>Secreted</location>
    </subcellularLocation>
</comment>
<comment type="tissue specificity">
    <text>Expressed by the venom gland.</text>
</comment>
<comment type="domain">
    <text evidence="4">Has the structural arrangement of an alpha-helix connected to antiparallel beta-sheets by disulfide bonds (CS-alpha/beta).</text>
</comment>
<comment type="similarity">
    <text evidence="4">Belongs to the long (4 C-C) scorpion toxin superfamily. Sodium channel inhibitor family. Beta subfamily.</text>
</comment>
<sequence>MKGMIMLISCLMLIEVVVGGKEGYLLDRSNGCKRSCFFGSTSWCNTECKSKSADKGYCAWPSCYCYGFTDDSKMWHLKTNKC</sequence>
<feature type="signal peptide" evidence="3">
    <location>
        <begin position="1"/>
        <end position="20"/>
    </location>
</feature>
<feature type="chain" id="PRO_5000525370" description="Toxin TdNa6">
    <location>
        <begin position="21"/>
        <end position="82"/>
    </location>
</feature>
<feature type="domain" description="LCN-type CS-alpha/beta" evidence="2">
    <location>
        <begin position="21"/>
        <end position="82"/>
    </location>
</feature>
<feature type="disulfide bond" evidence="2">
    <location>
        <begin position="32"/>
        <end position="82"/>
    </location>
</feature>
<feature type="disulfide bond" evidence="2">
    <location>
        <begin position="36"/>
        <end position="58"/>
    </location>
</feature>
<feature type="disulfide bond" evidence="2">
    <location>
        <begin position="44"/>
        <end position="63"/>
    </location>
</feature>
<feature type="disulfide bond" evidence="2">
    <location>
        <begin position="48"/>
        <end position="65"/>
    </location>
</feature>
<evidence type="ECO:0000250" key="1"/>
<evidence type="ECO:0000255" key="2">
    <source>
        <dbReference type="PROSITE-ProRule" id="PRU01210"/>
    </source>
</evidence>
<evidence type="ECO:0000269" key="3">
    <source>
    </source>
</evidence>
<evidence type="ECO:0000305" key="4"/>
<reference key="1">
    <citation type="journal article" date="2009" name="Biochimie">
        <title>Molecular cloning and nucleotide sequence analysis of genes from a cDNA library of the scorpion Tityus discrepans.</title>
        <authorList>
            <person name="D'Suze G."/>
            <person name="Schwartz E.F."/>
            <person name="Garcia-Gomez B.I."/>
            <person name="Sevcik C."/>
            <person name="Possani L.D."/>
        </authorList>
    </citation>
    <scope>NUCLEOTIDE SEQUENCE [MRNA]</scope>
    <scope>PROTEIN SEQUENCE OF 21-40</scope>
    <source>
        <tissue>Venom</tissue>
        <tissue>Venom gland</tissue>
    </source>
</reference>
<reference key="2">
    <citation type="journal article" date="2012" name="PLoS ONE">
        <title>Identification and phylogenetic analysis of Tityus pachyurus and Tityus obscurus novel putative Na+-channel scorpion toxins.</title>
        <authorList>
            <person name="Guerrero-Vargas J.A."/>
            <person name="Mourao C.B."/>
            <person name="Quintero-Hernandez V."/>
            <person name="Possani L.D."/>
            <person name="Schwartz E.F."/>
        </authorList>
    </citation>
    <scope>NOMENCLATURE</scope>
</reference>
<dbReference type="EMBL" id="FN392282">
    <property type="protein sequence ID" value="CAY61937.1"/>
    <property type="molecule type" value="mRNA"/>
</dbReference>
<dbReference type="SMR" id="C9X4K4"/>
<dbReference type="GO" id="GO:0005576">
    <property type="term" value="C:extracellular region"/>
    <property type="evidence" value="ECO:0007669"/>
    <property type="project" value="UniProtKB-SubCell"/>
</dbReference>
<dbReference type="GO" id="GO:0019871">
    <property type="term" value="F:sodium channel inhibitor activity"/>
    <property type="evidence" value="ECO:0007669"/>
    <property type="project" value="InterPro"/>
</dbReference>
<dbReference type="GO" id="GO:0090729">
    <property type="term" value="F:toxin activity"/>
    <property type="evidence" value="ECO:0007669"/>
    <property type="project" value="UniProtKB-KW"/>
</dbReference>
<dbReference type="CDD" id="cd23106">
    <property type="entry name" value="neurotoxins_LC_scorpion"/>
    <property type="match status" value="1"/>
</dbReference>
<dbReference type="Gene3D" id="3.30.30.10">
    <property type="entry name" value="Knottin, scorpion toxin-like"/>
    <property type="match status" value="1"/>
</dbReference>
<dbReference type="InterPro" id="IPR044062">
    <property type="entry name" value="LCN-type_CS_alpha_beta_dom"/>
</dbReference>
<dbReference type="InterPro" id="IPR036574">
    <property type="entry name" value="Scorpion_toxin-like_sf"/>
</dbReference>
<dbReference type="InterPro" id="IPR018218">
    <property type="entry name" value="Scorpion_toxinL"/>
</dbReference>
<dbReference type="InterPro" id="IPR002061">
    <property type="entry name" value="Scorpion_toxinL/defensin"/>
</dbReference>
<dbReference type="Pfam" id="PF00537">
    <property type="entry name" value="Toxin_3"/>
    <property type="match status" value="1"/>
</dbReference>
<dbReference type="PRINTS" id="PR00285">
    <property type="entry name" value="SCORPNTOXIN"/>
</dbReference>
<dbReference type="SUPFAM" id="SSF57095">
    <property type="entry name" value="Scorpion toxin-like"/>
    <property type="match status" value="1"/>
</dbReference>
<dbReference type="PROSITE" id="PS51863">
    <property type="entry name" value="LCN_CSAB"/>
    <property type="match status" value="1"/>
</dbReference>
<protein>
    <recommendedName>
        <fullName>Toxin TdNa6</fullName>
    </recommendedName>
    <alternativeName>
        <fullName>PT-Arthr*-beta* NaTx1.2</fullName>
    </alternativeName>
</protein>
<proteinExistence type="evidence at protein level"/>
<name>SCNA6_TITDI</name>
<keyword id="KW-0903">Direct protein sequencing</keyword>
<keyword id="KW-1015">Disulfide bond</keyword>
<keyword id="KW-0872">Ion channel impairing toxin</keyword>
<keyword id="KW-0528">Neurotoxin</keyword>
<keyword id="KW-0964">Secreted</keyword>
<keyword id="KW-0732">Signal</keyword>
<keyword id="KW-0800">Toxin</keyword>
<keyword id="KW-0738">Voltage-gated sodium channel impairing toxin</keyword>